<gene>
    <name evidence="1" type="primary">cysH</name>
    <name type="ordered locus">DR_A0015</name>
</gene>
<organism>
    <name type="scientific">Deinococcus radiodurans (strain ATCC 13939 / DSM 20539 / JCM 16871 / CCUG 27074 / LMG 4051 / NBRC 15346 / NCIMB 9279 / VKM B-1422 / R1)</name>
    <dbReference type="NCBI Taxonomy" id="243230"/>
    <lineage>
        <taxon>Bacteria</taxon>
        <taxon>Thermotogati</taxon>
        <taxon>Deinococcota</taxon>
        <taxon>Deinococci</taxon>
        <taxon>Deinococcales</taxon>
        <taxon>Deinococcaceae</taxon>
        <taxon>Deinococcus</taxon>
    </lineage>
</organism>
<dbReference type="EC" id="1.8.4.10" evidence="1"/>
<dbReference type="EMBL" id="AE001825">
    <property type="protein sequence ID" value="AAF12285.1"/>
    <property type="molecule type" value="Genomic_DNA"/>
</dbReference>
<dbReference type="PIR" id="C75594">
    <property type="entry name" value="C75594"/>
</dbReference>
<dbReference type="RefSeq" id="NP_285339.1">
    <property type="nucleotide sequence ID" value="NC_001264.1"/>
</dbReference>
<dbReference type="SMR" id="P56860"/>
<dbReference type="FunCoup" id="P56860">
    <property type="interactions" value="258"/>
</dbReference>
<dbReference type="STRING" id="243230.DR_A0015"/>
<dbReference type="PaxDb" id="243230-DR_A0015"/>
<dbReference type="EnsemblBacteria" id="AAF12285">
    <property type="protein sequence ID" value="AAF12285"/>
    <property type="gene ID" value="DR_A0015"/>
</dbReference>
<dbReference type="KEGG" id="dra:DR_A0015"/>
<dbReference type="PATRIC" id="fig|243230.17.peg.2901"/>
<dbReference type="eggNOG" id="COG0175">
    <property type="taxonomic scope" value="Bacteria"/>
</dbReference>
<dbReference type="HOGENOM" id="CLU_044089_2_0_0"/>
<dbReference type="InParanoid" id="P56860"/>
<dbReference type="OrthoDB" id="9772604at2"/>
<dbReference type="Proteomes" id="UP000002524">
    <property type="component" value="Chromosome 2"/>
</dbReference>
<dbReference type="GO" id="GO:0005737">
    <property type="term" value="C:cytoplasm"/>
    <property type="evidence" value="ECO:0007669"/>
    <property type="project" value="UniProtKB-SubCell"/>
</dbReference>
<dbReference type="GO" id="GO:0051539">
    <property type="term" value="F:4 iron, 4 sulfur cluster binding"/>
    <property type="evidence" value="ECO:0007669"/>
    <property type="project" value="UniProtKB-UniRule"/>
</dbReference>
<dbReference type="GO" id="GO:0043866">
    <property type="term" value="F:adenylyl-sulfate reductase (thioredoxin) activity"/>
    <property type="evidence" value="ECO:0007669"/>
    <property type="project" value="UniProtKB-EC"/>
</dbReference>
<dbReference type="GO" id="GO:0046872">
    <property type="term" value="F:metal ion binding"/>
    <property type="evidence" value="ECO:0007669"/>
    <property type="project" value="UniProtKB-KW"/>
</dbReference>
<dbReference type="GO" id="GO:0004604">
    <property type="term" value="F:phosphoadenylyl-sulfate reductase (thioredoxin) activity"/>
    <property type="evidence" value="ECO:0000318"/>
    <property type="project" value="GO_Central"/>
</dbReference>
<dbReference type="GO" id="GO:0070814">
    <property type="term" value="P:hydrogen sulfide biosynthetic process"/>
    <property type="evidence" value="ECO:0007669"/>
    <property type="project" value="UniProtKB-UniRule"/>
</dbReference>
<dbReference type="GO" id="GO:0019379">
    <property type="term" value="P:sulfate assimilation, phosphoadenylyl sulfate reduction by phosphoadenylyl-sulfate reductase (thioredoxin)"/>
    <property type="evidence" value="ECO:0000318"/>
    <property type="project" value="GO_Central"/>
</dbReference>
<dbReference type="CDD" id="cd23945">
    <property type="entry name" value="PAPS_reductase"/>
    <property type="match status" value="1"/>
</dbReference>
<dbReference type="Gene3D" id="3.40.50.620">
    <property type="entry name" value="HUPs"/>
    <property type="match status" value="1"/>
</dbReference>
<dbReference type="HAMAP" id="MF_00063">
    <property type="entry name" value="CysH"/>
    <property type="match status" value="1"/>
</dbReference>
<dbReference type="InterPro" id="IPR004511">
    <property type="entry name" value="PAPS/APS_Rdtase"/>
</dbReference>
<dbReference type="InterPro" id="IPR002500">
    <property type="entry name" value="PAPS_reduct_dom"/>
</dbReference>
<dbReference type="InterPro" id="IPR014729">
    <property type="entry name" value="Rossmann-like_a/b/a_fold"/>
</dbReference>
<dbReference type="NCBIfam" id="TIGR00434">
    <property type="entry name" value="cysH"/>
    <property type="match status" value="1"/>
</dbReference>
<dbReference type="NCBIfam" id="NF002537">
    <property type="entry name" value="PRK02090.1"/>
    <property type="match status" value="1"/>
</dbReference>
<dbReference type="PANTHER" id="PTHR46509">
    <property type="entry name" value="PHOSPHOADENOSINE PHOSPHOSULFATE REDUCTASE"/>
    <property type="match status" value="1"/>
</dbReference>
<dbReference type="PANTHER" id="PTHR46509:SF1">
    <property type="entry name" value="PHOSPHOADENOSINE PHOSPHOSULFATE REDUCTASE"/>
    <property type="match status" value="1"/>
</dbReference>
<dbReference type="Pfam" id="PF01507">
    <property type="entry name" value="PAPS_reduct"/>
    <property type="match status" value="1"/>
</dbReference>
<dbReference type="PIRSF" id="PIRSF000857">
    <property type="entry name" value="PAPS_reductase"/>
    <property type="match status" value="1"/>
</dbReference>
<dbReference type="SUPFAM" id="SSF52402">
    <property type="entry name" value="Adenine nucleotide alpha hydrolases-like"/>
    <property type="match status" value="1"/>
</dbReference>
<protein>
    <recommendedName>
        <fullName evidence="1">Adenosine 5'-phosphosulfate reductase</fullName>
        <shortName evidence="1">APS reductase</shortName>
        <ecNumber evidence="1">1.8.4.10</ecNumber>
    </recommendedName>
    <alternativeName>
        <fullName evidence="1">5'-adenylylsulfate reductase</fullName>
    </alternativeName>
    <alternativeName>
        <fullName evidence="1">Thioredoxin-dependent 5'-adenylylsulfate reductase</fullName>
    </alternativeName>
</protein>
<comment type="function">
    <text evidence="1">Catalyzes the formation of sulfite from adenosine 5'-phosphosulfate (APS) using thioredoxin as an electron donor.</text>
</comment>
<comment type="catalytic activity">
    <reaction evidence="1">
        <text>[thioredoxin]-disulfide + sulfite + AMP + 2 H(+) = adenosine 5'-phosphosulfate + [thioredoxin]-dithiol</text>
        <dbReference type="Rhea" id="RHEA:21976"/>
        <dbReference type="Rhea" id="RHEA-COMP:10698"/>
        <dbReference type="Rhea" id="RHEA-COMP:10700"/>
        <dbReference type="ChEBI" id="CHEBI:15378"/>
        <dbReference type="ChEBI" id="CHEBI:17359"/>
        <dbReference type="ChEBI" id="CHEBI:29950"/>
        <dbReference type="ChEBI" id="CHEBI:50058"/>
        <dbReference type="ChEBI" id="CHEBI:58243"/>
        <dbReference type="ChEBI" id="CHEBI:456215"/>
        <dbReference type="EC" id="1.8.4.10"/>
    </reaction>
</comment>
<comment type="cofactor">
    <cofactor evidence="1">
        <name>[4Fe-4S] cluster</name>
        <dbReference type="ChEBI" id="CHEBI:49883"/>
    </cofactor>
    <text evidence="1">Binds 1 [4Fe-4S] cluster per subunit.</text>
</comment>
<comment type="pathway">
    <text evidence="1">Sulfur metabolism; hydrogen sulfide biosynthesis; sulfite from sulfate.</text>
</comment>
<comment type="subcellular location">
    <subcellularLocation>
        <location evidence="1">Cytoplasm</location>
    </subcellularLocation>
</comment>
<comment type="similarity">
    <text evidence="1 3">Belongs to the PAPS reductase family. CysH subfamily.</text>
</comment>
<feature type="chain" id="PRO_0000100629" description="Adenosine 5'-phosphosulfate reductase">
    <location>
        <begin position="1"/>
        <end position="255"/>
    </location>
</feature>
<feature type="region of interest" description="Disordered" evidence="2">
    <location>
        <begin position="1"/>
        <end position="39"/>
    </location>
</feature>
<feature type="active site" description="Nucleophile; cysteine thiosulfonate intermediate" evidence="1">
    <location>
        <position position="246"/>
    </location>
</feature>
<feature type="binding site" evidence="1">
    <location>
        <position position="137"/>
    </location>
    <ligand>
        <name>[4Fe-4S] cluster</name>
        <dbReference type="ChEBI" id="CHEBI:49883"/>
    </ligand>
</feature>
<feature type="binding site" evidence="1">
    <location>
        <position position="138"/>
    </location>
    <ligand>
        <name>[4Fe-4S] cluster</name>
        <dbReference type="ChEBI" id="CHEBI:49883"/>
    </ligand>
</feature>
<feature type="binding site" evidence="1">
    <location>
        <position position="220"/>
    </location>
    <ligand>
        <name>[4Fe-4S] cluster</name>
        <dbReference type="ChEBI" id="CHEBI:49883"/>
    </ligand>
</feature>
<feature type="binding site" evidence="1">
    <location>
        <position position="223"/>
    </location>
    <ligand>
        <name>[4Fe-4S] cluster</name>
        <dbReference type="ChEBI" id="CHEBI:49883"/>
    </ligand>
</feature>
<evidence type="ECO:0000255" key="1">
    <source>
        <dbReference type="HAMAP-Rule" id="MF_00063"/>
    </source>
</evidence>
<evidence type="ECO:0000256" key="2">
    <source>
        <dbReference type="SAM" id="MobiDB-lite"/>
    </source>
</evidence>
<evidence type="ECO:0000305" key="3"/>
<accession>P56860</accession>
<reference key="1">
    <citation type="journal article" date="1999" name="Science">
        <title>Genome sequence of the radioresistant bacterium Deinococcus radiodurans R1.</title>
        <authorList>
            <person name="White O."/>
            <person name="Eisen J.A."/>
            <person name="Heidelberg J.F."/>
            <person name="Hickey E.K."/>
            <person name="Peterson J.D."/>
            <person name="Dodson R.J."/>
            <person name="Haft D.H."/>
            <person name="Gwinn M.L."/>
            <person name="Nelson W.C."/>
            <person name="Richardson D.L."/>
            <person name="Moffat K.S."/>
            <person name="Qin H."/>
            <person name="Jiang L."/>
            <person name="Pamphile W."/>
            <person name="Crosby M."/>
            <person name="Shen M."/>
            <person name="Vamathevan J.J."/>
            <person name="Lam P."/>
            <person name="McDonald L.A."/>
            <person name="Utterback T.R."/>
            <person name="Zalewski C."/>
            <person name="Makarova K.S."/>
            <person name="Aravind L."/>
            <person name="Daly M.J."/>
            <person name="Minton K.W."/>
            <person name="Fleischmann R.D."/>
            <person name="Ketchum K.A."/>
            <person name="Nelson K.E."/>
            <person name="Salzberg S.L."/>
            <person name="Smith H.O."/>
            <person name="Venter J.C."/>
            <person name="Fraser C.M."/>
        </authorList>
    </citation>
    <scope>NUCLEOTIDE SEQUENCE [LARGE SCALE GENOMIC DNA]</scope>
    <source>
        <strain>ATCC 13939 / DSM 20539 / JCM 16871 / CCUG 27074 / LMG 4051 / NBRC 15346 / NCIMB 9279 / VKM B-1422 / R1</strain>
    </source>
</reference>
<keyword id="KW-0963">Cytoplasm</keyword>
<keyword id="KW-0408">Iron</keyword>
<keyword id="KW-0411">Iron-sulfur</keyword>
<keyword id="KW-0479">Metal-binding</keyword>
<keyword id="KW-0560">Oxidoreductase</keyword>
<keyword id="KW-1185">Reference proteome</keyword>
<sequence>MMTAEVRTPEQGGGPLTTEPRAPRSAPGHADASAPAFGPETDPRDIIRWALAAHPDLLMPSAFNLNGVVLLDLAAQAGYRGEVVFVDTGYHFPETLATRDRLESRYPELTFVTLNAGASPDDGQTPPDLYASDPDACCAARKVDPLQRYLKEQGPSALLNARSRDQASTRADIPFVEEGGARRRVNPLAHWTREQLEAYAAEHDLPVNPLYFDGFLSIGCWPCTRAVKPGEDARAGRWAGKGKTECGLWQGENKL</sequence>
<name>CYSH_DEIRA</name>
<proteinExistence type="inferred from homology"/>